<protein>
    <recommendedName>
        <fullName evidence="1">PKHD-type hydroxylase XF_0598</fullName>
        <ecNumber evidence="1">1.14.11.-</ecNumber>
    </recommendedName>
</protein>
<keyword id="KW-0223">Dioxygenase</keyword>
<keyword id="KW-0408">Iron</keyword>
<keyword id="KW-0479">Metal-binding</keyword>
<keyword id="KW-0560">Oxidoreductase</keyword>
<keyword id="KW-0847">Vitamin C</keyword>
<comment type="cofactor">
    <cofactor evidence="1">
        <name>Fe(2+)</name>
        <dbReference type="ChEBI" id="CHEBI:29033"/>
    </cofactor>
    <text evidence="1">Binds 1 Fe(2+) ion per subunit.</text>
</comment>
<comment type="cofactor">
    <cofactor evidence="1">
        <name>L-ascorbate</name>
        <dbReference type="ChEBI" id="CHEBI:38290"/>
    </cofactor>
</comment>
<organism>
    <name type="scientific">Xylella fastidiosa (strain 9a5c)</name>
    <dbReference type="NCBI Taxonomy" id="160492"/>
    <lineage>
        <taxon>Bacteria</taxon>
        <taxon>Pseudomonadati</taxon>
        <taxon>Pseudomonadota</taxon>
        <taxon>Gammaproteobacteria</taxon>
        <taxon>Lysobacterales</taxon>
        <taxon>Lysobacteraceae</taxon>
        <taxon>Xylella</taxon>
    </lineage>
</organism>
<name>Y598_XYLFA</name>
<reference key="1">
    <citation type="journal article" date="2000" name="Nature">
        <title>The genome sequence of the plant pathogen Xylella fastidiosa.</title>
        <authorList>
            <person name="Simpson A.J.G."/>
            <person name="Reinach F.C."/>
            <person name="Arruda P."/>
            <person name="Abreu F.A."/>
            <person name="Acencio M."/>
            <person name="Alvarenga R."/>
            <person name="Alves L.M.C."/>
            <person name="Araya J.E."/>
            <person name="Baia G.S."/>
            <person name="Baptista C.S."/>
            <person name="Barros M.H."/>
            <person name="Bonaccorsi E.D."/>
            <person name="Bordin S."/>
            <person name="Bove J.M."/>
            <person name="Briones M.R.S."/>
            <person name="Bueno M.R.P."/>
            <person name="Camargo A.A."/>
            <person name="Camargo L.E.A."/>
            <person name="Carraro D.M."/>
            <person name="Carrer H."/>
            <person name="Colauto N.B."/>
            <person name="Colombo C."/>
            <person name="Costa F.F."/>
            <person name="Costa M.C.R."/>
            <person name="Costa-Neto C.M."/>
            <person name="Coutinho L.L."/>
            <person name="Cristofani M."/>
            <person name="Dias-Neto E."/>
            <person name="Docena C."/>
            <person name="El-Dorry H."/>
            <person name="Facincani A.P."/>
            <person name="Ferreira A.J.S."/>
            <person name="Ferreira V.C.A."/>
            <person name="Ferro J.A."/>
            <person name="Fraga J.S."/>
            <person name="Franca S.C."/>
            <person name="Franco M.C."/>
            <person name="Frohme M."/>
            <person name="Furlan L.R."/>
            <person name="Garnier M."/>
            <person name="Goldman G.H."/>
            <person name="Goldman M.H.S."/>
            <person name="Gomes S.L."/>
            <person name="Gruber A."/>
            <person name="Ho P.L."/>
            <person name="Hoheisel J.D."/>
            <person name="Junqueira M.L."/>
            <person name="Kemper E.L."/>
            <person name="Kitajima J.P."/>
            <person name="Krieger J.E."/>
            <person name="Kuramae E.E."/>
            <person name="Laigret F."/>
            <person name="Lambais M.R."/>
            <person name="Leite L.C.C."/>
            <person name="Lemos E.G.M."/>
            <person name="Lemos M.V.F."/>
            <person name="Lopes S.A."/>
            <person name="Lopes C.R."/>
            <person name="Machado J.A."/>
            <person name="Machado M.A."/>
            <person name="Madeira A.M.B.N."/>
            <person name="Madeira H.M.F."/>
            <person name="Marino C.L."/>
            <person name="Marques M.V."/>
            <person name="Martins E.A.L."/>
            <person name="Martins E.M.F."/>
            <person name="Matsukuma A.Y."/>
            <person name="Menck C.F.M."/>
            <person name="Miracca E.C."/>
            <person name="Miyaki C.Y."/>
            <person name="Monteiro-Vitorello C.B."/>
            <person name="Moon D.H."/>
            <person name="Nagai M.A."/>
            <person name="Nascimento A.L.T.O."/>
            <person name="Netto L.E.S."/>
            <person name="Nhani A. Jr."/>
            <person name="Nobrega F.G."/>
            <person name="Nunes L.R."/>
            <person name="Oliveira M.A."/>
            <person name="de Oliveira M.C."/>
            <person name="de Oliveira R.C."/>
            <person name="Palmieri D.A."/>
            <person name="Paris A."/>
            <person name="Peixoto B.R."/>
            <person name="Pereira G.A.G."/>
            <person name="Pereira H.A. Jr."/>
            <person name="Pesquero J.B."/>
            <person name="Quaggio R.B."/>
            <person name="Roberto P.G."/>
            <person name="Rodrigues V."/>
            <person name="de Rosa A.J.M."/>
            <person name="de Rosa V.E. Jr."/>
            <person name="de Sa R.G."/>
            <person name="Santelli R.V."/>
            <person name="Sawasaki H.E."/>
            <person name="da Silva A.C.R."/>
            <person name="da Silva A.M."/>
            <person name="da Silva F.R."/>
            <person name="Silva W.A. Jr."/>
            <person name="da Silveira J.F."/>
            <person name="Silvestri M.L.Z."/>
            <person name="Siqueira W.J."/>
            <person name="de Souza A.A."/>
            <person name="de Souza A.P."/>
            <person name="Terenzi M.F."/>
            <person name="Truffi D."/>
            <person name="Tsai S.M."/>
            <person name="Tsuhako M.H."/>
            <person name="Vallada H."/>
            <person name="Van Sluys M.A."/>
            <person name="Verjovski-Almeida S."/>
            <person name="Vettore A.L."/>
            <person name="Zago M.A."/>
            <person name="Zatz M."/>
            <person name="Meidanis J."/>
            <person name="Setubal J.C."/>
        </authorList>
    </citation>
    <scope>NUCLEOTIDE SEQUENCE [LARGE SCALE GENOMIC DNA]</scope>
    <source>
        <strain>9a5c</strain>
    </source>
</reference>
<sequence>MLLHIPTILSRTQATSMQERLAAANWTDGRETVGPQGAQVKHNLQLPETSPLRQELGNEILDALARSPLYFAATLPLRTLPPRFNCYQENHQYGFHVDGAVMSLPIAPGHTPASLRSDISCTLFLNDPDEYEGGELIIADTYGEHEVKLPAGDLIIYPSTSLHRVAPVTRGMRIASFFWVQSLVRQATHRHQLLELDTAIQSLTASNTDHNTILRLTNIYHNLLREWSET</sequence>
<dbReference type="EC" id="1.14.11.-" evidence="1"/>
<dbReference type="EMBL" id="AE003849">
    <property type="protein sequence ID" value="AAF83408.1"/>
    <property type="molecule type" value="Genomic_DNA"/>
</dbReference>
<dbReference type="PIR" id="H82786">
    <property type="entry name" value="H82786"/>
</dbReference>
<dbReference type="RefSeq" id="WP_010893123.1">
    <property type="nucleotide sequence ID" value="NC_002488.3"/>
</dbReference>
<dbReference type="SMR" id="Q9PFQ9"/>
<dbReference type="STRING" id="160492.XF_0598"/>
<dbReference type="KEGG" id="xfa:XF_0598"/>
<dbReference type="eggNOG" id="COG3128">
    <property type="taxonomic scope" value="Bacteria"/>
</dbReference>
<dbReference type="HOGENOM" id="CLU_106663_0_0_6"/>
<dbReference type="Proteomes" id="UP000000812">
    <property type="component" value="Chromosome"/>
</dbReference>
<dbReference type="GO" id="GO:0016706">
    <property type="term" value="F:2-oxoglutarate-dependent dioxygenase activity"/>
    <property type="evidence" value="ECO:0007669"/>
    <property type="project" value="UniProtKB-UniRule"/>
</dbReference>
<dbReference type="GO" id="GO:0005506">
    <property type="term" value="F:iron ion binding"/>
    <property type="evidence" value="ECO:0007669"/>
    <property type="project" value="UniProtKB-UniRule"/>
</dbReference>
<dbReference type="GO" id="GO:0031418">
    <property type="term" value="F:L-ascorbic acid binding"/>
    <property type="evidence" value="ECO:0007669"/>
    <property type="project" value="UniProtKB-KW"/>
</dbReference>
<dbReference type="GO" id="GO:0006974">
    <property type="term" value="P:DNA damage response"/>
    <property type="evidence" value="ECO:0007669"/>
    <property type="project" value="TreeGrafter"/>
</dbReference>
<dbReference type="GO" id="GO:0006879">
    <property type="term" value="P:intracellular iron ion homeostasis"/>
    <property type="evidence" value="ECO:0007669"/>
    <property type="project" value="TreeGrafter"/>
</dbReference>
<dbReference type="Gene3D" id="2.60.120.620">
    <property type="entry name" value="q2cbj1_9rhob like domain"/>
    <property type="match status" value="1"/>
</dbReference>
<dbReference type="Gene3D" id="4.10.860.20">
    <property type="entry name" value="Rabenosyn, Rab binding domain"/>
    <property type="match status" value="1"/>
</dbReference>
<dbReference type="HAMAP" id="MF_00657">
    <property type="entry name" value="Hydroxyl_YbiX"/>
    <property type="match status" value="1"/>
</dbReference>
<dbReference type="InterPro" id="IPR005123">
    <property type="entry name" value="Oxoglu/Fe-dep_dioxygenase_dom"/>
</dbReference>
<dbReference type="InterPro" id="IPR041097">
    <property type="entry name" value="PKHD_C"/>
</dbReference>
<dbReference type="InterPro" id="IPR023550">
    <property type="entry name" value="PKHD_hydroxylase"/>
</dbReference>
<dbReference type="InterPro" id="IPR006620">
    <property type="entry name" value="Pro_4_hyd_alph"/>
</dbReference>
<dbReference type="InterPro" id="IPR044862">
    <property type="entry name" value="Pro_4_hyd_alph_FE2OG_OXY"/>
</dbReference>
<dbReference type="NCBIfam" id="NF003974">
    <property type="entry name" value="PRK05467.1-3"/>
    <property type="match status" value="1"/>
</dbReference>
<dbReference type="NCBIfam" id="NF003975">
    <property type="entry name" value="PRK05467.1-4"/>
    <property type="match status" value="1"/>
</dbReference>
<dbReference type="PANTHER" id="PTHR41536">
    <property type="entry name" value="PKHD-TYPE HYDROXYLASE YBIX"/>
    <property type="match status" value="1"/>
</dbReference>
<dbReference type="PANTHER" id="PTHR41536:SF1">
    <property type="entry name" value="PKHD-TYPE HYDROXYLASE YBIX"/>
    <property type="match status" value="1"/>
</dbReference>
<dbReference type="Pfam" id="PF13640">
    <property type="entry name" value="2OG-FeII_Oxy_3"/>
    <property type="match status" value="1"/>
</dbReference>
<dbReference type="Pfam" id="PF18331">
    <property type="entry name" value="PKHD_C"/>
    <property type="match status" value="1"/>
</dbReference>
<dbReference type="SMART" id="SM00702">
    <property type="entry name" value="P4Hc"/>
    <property type="match status" value="1"/>
</dbReference>
<dbReference type="PROSITE" id="PS51471">
    <property type="entry name" value="FE2OG_OXY"/>
    <property type="match status" value="1"/>
</dbReference>
<proteinExistence type="inferred from homology"/>
<feature type="chain" id="PRO_0000206687" description="PKHD-type hydroxylase XF_0598">
    <location>
        <begin position="1"/>
        <end position="230"/>
    </location>
</feature>
<feature type="domain" description="Fe2OG dioxygenase" evidence="1">
    <location>
        <begin position="78"/>
        <end position="182"/>
    </location>
</feature>
<feature type="binding site" evidence="1">
    <location>
        <position position="96"/>
    </location>
    <ligand>
        <name>Fe cation</name>
        <dbReference type="ChEBI" id="CHEBI:24875"/>
    </ligand>
</feature>
<feature type="binding site" evidence="1">
    <location>
        <position position="98"/>
    </location>
    <ligand>
        <name>Fe cation</name>
        <dbReference type="ChEBI" id="CHEBI:24875"/>
    </ligand>
</feature>
<feature type="binding site" evidence="1">
    <location>
        <position position="163"/>
    </location>
    <ligand>
        <name>Fe cation</name>
        <dbReference type="ChEBI" id="CHEBI:24875"/>
    </ligand>
</feature>
<feature type="binding site" evidence="1">
    <location>
        <position position="173"/>
    </location>
    <ligand>
        <name>2-oxoglutarate</name>
        <dbReference type="ChEBI" id="CHEBI:16810"/>
    </ligand>
</feature>
<accession>Q9PFQ9</accession>
<evidence type="ECO:0000255" key="1">
    <source>
        <dbReference type="HAMAP-Rule" id="MF_00657"/>
    </source>
</evidence>
<gene>
    <name type="ordered locus">XF_0598</name>
</gene>